<reference key="1">
    <citation type="journal article" date="1990" name="Biochemistry">
        <title>Cloning, sequence determination, and expression of the genes encoding the subunits of the nickel-containing 8-hydroxy-5-deazaflavin reducing hydrogenase from Methanobacterium thermoautotrophicum delta H.</title>
        <authorList>
            <person name="Alex L.A."/>
            <person name="Reeve J.N."/>
            <person name="Orme-Johnson W.H."/>
            <person name="Walsh C.T."/>
        </authorList>
    </citation>
    <scope>NUCLEOTIDE SEQUENCE [GENOMIC DNA]</scope>
    <scope>PROTEIN SEQUENCE OF 2-31 AND 185-201</scope>
    <source>
        <strain>ATCC 29096 / DSM 1053 / JCM 10044 / NBRC 100330 / Delta H</strain>
    </source>
</reference>
<reference key="2">
    <citation type="journal article" date="1997" name="J. Bacteriol.">
        <title>Complete genome sequence of Methanobacterium thermoautotrophicum deltaH: functional analysis and comparative genomics.</title>
        <authorList>
            <person name="Smith D.R."/>
            <person name="Doucette-Stamm L.A."/>
            <person name="Deloughery C."/>
            <person name="Lee H.-M."/>
            <person name="Dubois J."/>
            <person name="Aldredge T."/>
            <person name="Bashirzadeh R."/>
            <person name="Blakely D."/>
            <person name="Cook R."/>
            <person name="Gilbert K."/>
            <person name="Harrison D."/>
            <person name="Hoang L."/>
            <person name="Keagle P."/>
            <person name="Lumm W."/>
            <person name="Pothier B."/>
            <person name="Qiu D."/>
            <person name="Spadafora R."/>
            <person name="Vicare R."/>
            <person name="Wang Y."/>
            <person name="Wierzbowski J."/>
            <person name="Gibson R."/>
            <person name="Jiwani N."/>
            <person name="Caruso A."/>
            <person name="Bush D."/>
            <person name="Safer H."/>
            <person name="Patwell D."/>
            <person name="Prabhakar S."/>
            <person name="McDougall S."/>
            <person name="Shimer G."/>
            <person name="Goyal A."/>
            <person name="Pietrovski S."/>
            <person name="Church G.M."/>
            <person name="Daniels C.J."/>
            <person name="Mao J.-I."/>
            <person name="Rice P."/>
            <person name="Noelling J."/>
            <person name="Reeve J.N."/>
        </authorList>
    </citation>
    <scope>NUCLEOTIDE SEQUENCE [LARGE SCALE GENOMIC DNA]</scope>
    <source>
        <strain>ATCC 29096 / DSM 1053 / JCM 10044 / NBRC 100330 / Delta H</strain>
    </source>
</reference>
<reference key="3">
    <citation type="journal article" date="1987" name="Biochemistry">
        <title>8-hydroxy-5-deazaflavin-reducing hydrogenase from Methanobacterium thermoautotrophicum: 1. Purification and characterization.</title>
        <authorList>
            <person name="Fox J.A."/>
            <person name="Livingston D.J."/>
            <person name="Orme-Johnson W.H."/>
            <person name="Walsh C.T."/>
        </authorList>
    </citation>
    <scope>PROTEIN SEQUENCE OF 2-32</scope>
    <source>
        <strain>ATCC 29096 / DSM 1053 / JCM 10044 / NBRC 100330 / Delta H</strain>
    </source>
</reference>
<accession>P19499</accession>
<accession>O27356</accession>
<sequence>MVLGTYKEIVSARSTDREIQKLAQDGGIVTGLLAYALDEGIIEGAVVAGPGKEFWKPEPMVAMTSDELKAAAGTKYTFSPNVLMLKKAVRQYGIEKLGTVAIPCQTMGIRKAQTYPFGVRFVADKIKLLVGIYCMENFPYTSLQTFICEKLGLNMELVEKMDIGKGKFWVYTQDDVYTLPLKETHGYEQAGCKICKDYVAELADVSTGSVGSPDGWSTVITRTDSGDSILKQAVEAGIFETKPIEEVKPGLGLLEKLSAQKKEKAEKNIAARKEMGLPTPY</sequence>
<organism>
    <name type="scientific">Methanothermobacter thermautotrophicus (strain ATCC 29096 / DSM 1053 / JCM 10044 / NBRC 100330 / Delta H)</name>
    <name type="common">Methanobacterium thermoautotrophicum</name>
    <dbReference type="NCBI Taxonomy" id="187420"/>
    <lineage>
        <taxon>Archaea</taxon>
        <taxon>Methanobacteriati</taxon>
        <taxon>Methanobacteriota</taxon>
        <taxon>Methanomada group</taxon>
        <taxon>Methanobacteria</taxon>
        <taxon>Methanobacteriales</taxon>
        <taxon>Methanobacteriaceae</taxon>
        <taxon>Methanothermobacter</taxon>
    </lineage>
</organism>
<dbReference type="EC" id="1.12.98.1"/>
<dbReference type="EMBL" id="J02914">
    <property type="protein sequence ID" value="AAA72190.1"/>
    <property type="molecule type" value="Genomic_DNA"/>
</dbReference>
<dbReference type="EMBL" id="AE000666">
    <property type="protein sequence ID" value="AAB85777.1"/>
    <property type="molecule type" value="Genomic_DNA"/>
</dbReference>
<dbReference type="PIR" id="D35620">
    <property type="entry name" value="D35620"/>
</dbReference>
<dbReference type="RefSeq" id="WP_010876912.1">
    <property type="nucleotide sequence ID" value="NC_000916.1"/>
</dbReference>
<dbReference type="SMR" id="P19499"/>
<dbReference type="FunCoup" id="P19499">
    <property type="interactions" value="1"/>
</dbReference>
<dbReference type="IntAct" id="P19499">
    <property type="interactions" value="1"/>
</dbReference>
<dbReference type="STRING" id="187420.MTH_1297"/>
<dbReference type="PaxDb" id="187420-MTH_1297"/>
<dbReference type="EnsemblBacteria" id="AAB85777">
    <property type="protein sequence ID" value="AAB85777"/>
    <property type="gene ID" value="MTH_1297"/>
</dbReference>
<dbReference type="GeneID" id="1471014"/>
<dbReference type="KEGG" id="mth:MTH_1297"/>
<dbReference type="PATRIC" id="fig|187420.15.peg.1268"/>
<dbReference type="HOGENOM" id="CLU_037958_0_0_2"/>
<dbReference type="InParanoid" id="P19499"/>
<dbReference type="BRENDA" id="1.12.98.1">
    <property type="organism ID" value="3256"/>
</dbReference>
<dbReference type="Proteomes" id="UP000005223">
    <property type="component" value="Chromosome"/>
</dbReference>
<dbReference type="GO" id="GO:0050454">
    <property type="term" value="F:coenzyme F420 hydrogenase activity"/>
    <property type="evidence" value="ECO:0007669"/>
    <property type="project" value="UniProtKB-EC"/>
</dbReference>
<dbReference type="GO" id="GO:0050660">
    <property type="term" value="F:flavin adenine dinucleotide binding"/>
    <property type="evidence" value="ECO:0007669"/>
    <property type="project" value="InterPro"/>
</dbReference>
<dbReference type="GO" id="GO:0051536">
    <property type="term" value="F:iron-sulfur cluster binding"/>
    <property type="evidence" value="ECO:0007669"/>
    <property type="project" value="UniProtKB-KW"/>
</dbReference>
<dbReference type="GO" id="GO:0016151">
    <property type="term" value="F:nickel cation binding"/>
    <property type="evidence" value="ECO:0007669"/>
    <property type="project" value="InterPro"/>
</dbReference>
<dbReference type="GO" id="GO:0052592">
    <property type="term" value="F:oxidoreductase activity, acting on CH or CH2 groups, with an iron-sulfur protein as acceptor"/>
    <property type="evidence" value="ECO:0007669"/>
    <property type="project" value="TreeGrafter"/>
</dbReference>
<dbReference type="Gene3D" id="3.10.450.750">
    <property type="match status" value="1"/>
</dbReference>
<dbReference type="InterPro" id="IPR007516">
    <property type="entry name" value="Co_F420_Hydgase/DH_bsu_N"/>
</dbReference>
<dbReference type="InterPro" id="IPR045220">
    <property type="entry name" value="FRHB/FDHB/HCAR-like"/>
</dbReference>
<dbReference type="InterPro" id="IPR017679">
    <property type="entry name" value="FrhB_archaea"/>
</dbReference>
<dbReference type="InterPro" id="IPR007525">
    <property type="entry name" value="FrhB_FdhB_C"/>
</dbReference>
<dbReference type="NCBIfam" id="TIGR03289">
    <property type="entry name" value="frhB"/>
    <property type="match status" value="1"/>
</dbReference>
<dbReference type="NCBIfam" id="NF006807">
    <property type="entry name" value="PRK09325.1"/>
    <property type="match status" value="1"/>
</dbReference>
<dbReference type="PANTHER" id="PTHR31332">
    <property type="entry name" value="7-HYDROXYMETHYL CHLOROPHYLL A REDUCTASE, CHLOROPLASTIC"/>
    <property type="match status" value="1"/>
</dbReference>
<dbReference type="PANTHER" id="PTHR31332:SF6">
    <property type="entry name" value="FORMATE DEHYDROGENASE SUBUNIT BETA"/>
    <property type="match status" value="1"/>
</dbReference>
<dbReference type="Pfam" id="PF04432">
    <property type="entry name" value="FrhB_FdhB_C"/>
    <property type="match status" value="1"/>
</dbReference>
<dbReference type="Pfam" id="PF04422">
    <property type="entry name" value="FrhB_FdhB_N"/>
    <property type="match status" value="1"/>
</dbReference>
<protein>
    <recommendedName>
        <fullName>Coenzyme F420 hydrogenase subunit beta</fullName>
        <ecNumber>1.12.98.1</ecNumber>
    </recommendedName>
    <alternativeName>
        <fullName>8-hydroxy-5-deazaflavin-reducing hydrogenase subunit beta</fullName>
        <shortName>FRH</shortName>
    </alternativeName>
</protein>
<proteinExistence type="evidence at protein level"/>
<name>FRHB_METTH</name>
<comment type="function">
    <text>Reduces the physiological low-potential two-electron acceptor coenzyme F420, and the artificial one-electron acceptor methylviologen.</text>
</comment>
<comment type="catalytic activity">
    <reaction>
        <text>oxidized coenzyme F420-(gamma-L-Glu)(n) + H2 + H(+) = reduced coenzyme F420-(gamma-L-Glu)(n)</text>
        <dbReference type="Rhea" id="RHEA:23760"/>
        <dbReference type="Rhea" id="RHEA-COMP:12939"/>
        <dbReference type="Rhea" id="RHEA-COMP:14378"/>
        <dbReference type="ChEBI" id="CHEBI:15378"/>
        <dbReference type="ChEBI" id="CHEBI:18276"/>
        <dbReference type="ChEBI" id="CHEBI:133980"/>
        <dbReference type="ChEBI" id="CHEBI:139511"/>
        <dbReference type="EC" id="1.12.98.1"/>
    </reaction>
</comment>
<comment type="cofactor">
    <cofactor>
        <name>Ni(2+)</name>
        <dbReference type="ChEBI" id="CHEBI:49786"/>
    </cofactor>
</comment>
<comment type="cofactor">
    <cofactor>
        <name>iron-sulfur cluster</name>
        <dbReference type="ChEBI" id="CHEBI:30408"/>
    </cofactor>
    <text>There are 12-13 Fe atoms per alpha/beta/gamma unit of the FRH.</text>
</comment>
<comment type="cofactor">
    <cofactor>
        <name>FAD</name>
        <dbReference type="ChEBI" id="CHEBI:57692"/>
    </cofactor>
</comment>
<comment type="subunit">
    <text>Heterocomplex of the form (alpha(1)beta(1)gamma(1))(8).</text>
</comment>
<comment type="similarity">
    <text evidence="3">Belongs to the FrhB family.</text>
</comment>
<feature type="initiator methionine" description="Removed" evidence="1 2">
    <location>
        <position position="1"/>
    </location>
</feature>
<feature type="chain" id="PRO_0000159229" description="Coenzyme F420 hydrogenase subunit beta">
    <location>
        <begin position="2"/>
        <end position="281"/>
    </location>
</feature>
<feature type="sequence conflict" description="In Ref. 2." evidence="3" ref="2">
    <original>G</original>
    <variation>C</variation>
    <location>
        <position position="4"/>
    </location>
</feature>
<feature type="sequence conflict" description="In Ref. 1; AAA72190." evidence="3" ref="1">
    <original>L</original>
    <variation>F</variation>
    <location>
        <position position="230"/>
    </location>
</feature>
<keyword id="KW-0903">Direct protein sequencing</keyword>
<keyword id="KW-0408">Iron</keyword>
<keyword id="KW-0411">Iron-sulfur</keyword>
<keyword id="KW-0479">Metal-binding</keyword>
<keyword id="KW-0560">Oxidoreductase</keyword>
<keyword id="KW-1185">Reference proteome</keyword>
<evidence type="ECO:0000269" key="1">
    <source>
    </source>
</evidence>
<evidence type="ECO:0000269" key="2">
    <source>
    </source>
</evidence>
<evidence type="ECO:0000305" key="3"/>
<gene>
    <name type="primary">frhB</name>
    <name type="ordered locus">MTH_1297</name>
</gene>